<name>UVRC_CROS8</name>
<sequence length="610" mass="68447">MSEVFDSKSFLKTVTSQPGVYRMYDASGTVIYVGKAKDLKKRLSSYFRSNLASRKTEALVAQIHNIDVTVTHTETEALLLEHNYIKLYQPRYNVLLRDDKSYPYIFLSGDTHPRLAIHRGAKHAKGEYFGPFPNGYAVRETLALLQKIFPIRQCENSVYRNRSRPCLQYQIGRCLGPCVEGLVSEEDYAQQVEYVRLFLAGKDDQVINQLVSRMEQASQNLAFEEAARLRDQIQAVRRVTEKQFVSNNGDDLDVIGVAFESGMACLHVLFIRQGKVLGSRSYYPKVPNGTELAEVVETFVGQFYLQGSQMRTLPGEILLDFPLTTPELLAETLTEIAGRRVNVQTRPRGDRARYLKLARTNAATALTTRLSQQSTISQRLTALAQALHLPEIKRMECFDISHTMGEQTVASCVVFDANGPLRAEYRRYNITGITPGDDYAAMNQVLRRRYGKAIEESKVPDIILIDGGKGQLGQAKSVFAELDVPWDKHHPLLLGVAKGSDRKAGLETLFLEPEGEGFALPPDSPALHVIQHIRDESHNHAITGHRKKRAKVKNTSTLETIEGIGPKRRQMLLKYMGGLQPLLNASVEEIAKVPGISQALAEKIYYSLKH</sequence>
<accession>A7MJG4</accession>
<proteinExistence type="inferred from homology"/>
<gene>
    <name evidence="1" type="primary">uvrC</name>
    <name type="ordered locus">ESA_01310</name>
</gene>
<keyword id="KW-0963">Cytoplasm</keyword>
<keyword id="KW-0227">DNA damage</keyword>
<keyword id="KW-0228">DNA excision</keyword>
<keyword id="KW-0234">DNA repair</keyword>
<keyword id="KW-0267">Excision nuclease</keyword>
<keyword id="KW-1185">Reference proteome</keyword>
<keyword id="KW-0742">SOS response</keyword>
<protein>
    <recommendedName>
        <fullName evidence="1">UvrABC system protein C</fullName>
        <shortName evidence="1">Protein UvrC</shortName>
    </recommendedName>
    <alternativeName>
        <fullName evidence="1">Excinuclease ABC subunit C</fullName>
    </alternativeName>
</protein>
<evidence type="ECO:0000255" key="1">
    <source>
        <dbReference type="HAMAP-Rule" id="MF_00203"/>
    </source>
</evidence>
<feature type="chain" id="PRO_1000077784" description="UvrABC system protein C">
    <location>
        <begin position="1"/>
        <end position="610"/>
    </location>
</feature>
<feature type="domain" description="GIY-YIG" evidence="1">
    <location>
        <begin position="16"/>
        <end position="94"/>
    </location>
</feature>
<feature type="domain" description="UVR" evidence="1">
    <location>
        <begin position="204"/>
        <end position="239"/>
    </location>
</feature>
<reference key="1">
    <citation type="journal article" date="2010" name="PLoS ONE">
        <title>Genome sequence of Cronobacter sakazakii BAA-894 and comparative genomic hybridization analysis with other Cronobacter species.</title>
        <authorList>
            <person name="Kucerova E."/>
            <person name="Clifton S.W."/>
            <person name="Xia X.Q."/>
            <person name="Long F."/>
            <person name="Porwollik S."/>
            <person name="Fulton L."/>
            <person name="Fronick C."/>
            <person name="Minx P."/>
            <person name="Kyung K."/>
            <person name="Warren W."/>
            <person name="Fulton R."/>
            <person name="Feng D."/>
            <person name="Wollam A."/>
            <person name="Shah N."/>
            <person name="Bhonagiri V."/>
            <person name="Nash W.E."/>
            <person name="Hallsworth-Pepin K."/>
            <person name="Wilson R.K."/>
            <person name="McClelland M."/>
            <person name="Forsythe S.J."/>
        </authorList>
    </citation>
    <scope>NUCLEOTIDE SEQUENCE [LARGE SCALE GENOMIC DNA]</scope>
    <source>
        <strain>ATCC BAA-894</strain>
    </source>
</reference>
<organism>
    <name type="scientific">Cronobacter sakazakii (strain ATCC BAA-894)</name>
    <name type="common">Enterobacter sakazakii</name>
    <dbReference type="NCBI Taxonomy" id="290339"/>
    <lineage>
        <taxon>Bacteria</taxon>
        <taxon>Pseudomonadati</taxon>
        <taxon>Pseudomonadota</taxon>
        <taxon>Gammaproteobacteria</taxon>
        <taxon>Enterobacterales</taxon>
        <taxon>Enterobacteriaceae</taxon>
        <taxon>Cronobacter</taxon>
    </lineage>
</organism>
<comment type="function">
    <text evidence="1">The UvrABC repair system catalyzes the recognition and processing of DNA lesions. UvrC both incises the 5' and 3' sides of the lesion. The N-terminal half is responsible for the 3' incision and the C-terminal half is responsible for the 5' incision.</text>
</comment>
<comment type="subunit">
    <text evidence="1">Interacts with UvrB in an incision complex.</text>
</comment>
<comment type="subcellular location">
    <subcellularLocation>
        <location evidence="1">Cytoplasm</location>
    </subcellularLocation>
</comment>
<comment type="similarity">
    <text evidence="1">Belongs to the UvrC family.</text>
</comment>
<dbReference type="EMBL" id="CP000783">
    <property type="protein sequence ID" value="ABU76572.1"/>
    <property type="molecule type" value="Genomic_DNA"/>
</dbReference>
<dbReference type="RefSeq" id="WP_012124423.1">
    <property type="nucleotide sequence ID" value="NC_009778.1"/>
</dbReference>
<dbReference type="SMR" id="A7MJG4"/>
<dbReference type="KEGG" id="esa:ESA_01310"/>
<dbReference type="PATRIC" id="fig|290339.8.peg.1160"/>
<dbReference type="HOGENOM" id="CLU_014841_3_0_6"/>
<dbReference type="Proteomes" id="UP000000260">
    <property type="component" value="Chromosome"/>
</dbReference>
<dbReference type="GO" id="GO:0005737">
    <property type="term" value="C:cytoplasm"/>
    <property type="evidence" value="ECO:0007669"/>
    <property type="project" value="UniProtKB-SubCell"/>
</dbReference>
<dbReference type="GO" id="GO:0009380">
    <property type="term" value="C:excinuclease repair complex"/>
    <property type="evidence" value="ECO:0007669"/>
    <property type="project" value="InterPro"/>
</dbReference>
<dbReference type="GO" id="GO:0003677">
    <property type="term" value="F:DNA binding"/>
    <property type="evidence" value="ECO:0007669"/>
    <property type="project" value="UniProtKB-UniRule"/>
</dbReference>
<dbReference type="GO" id="GO:0009381">
    <property type="term" value="F:excinuclease ABC activity"/>
    <property type="evidence" value="ECO:0007669"/>
    <property type="project" value="UniProtKB-UniRule"/>
</dbReference>
<dbReference type="GO" id="GO:0006289">
    <property type="term" value="P:nucleotide-excision repair"/>
    <property type="evidence" value="ECO:0007669"/>
    <property type="project" value="UniProtKB-UniRule"/>
</dbReference>
<dbReference type="GO" id="GO:0009432">
    <property type="term" value="P:SOS response"/>
    <property type="evidence" value="ECO:0007669"/>
    <property type="project" value="UniProtKB-UniRule"/>
</dbReference>
<dbReference type="CDD" id="cd10434">
    <property type="entry name" value="GIY-YIG_UvrC_Cho"/>
    <property type="match status" value="1"/>
</dbReference>
<dbReference type="FunFam" id="1.10.150.20:FF:000005">
    <property type="entry name" value="UvrABC system protein C"/>
    <property type="match status" value="1"/>
</dbReference>
<dbReference type="FunFam" id="3.30.420.340:FF:000001">
    <property type="entry name" value="UvrABC system protein C"/>
    <property type="match status" value="1"/>
</dbReference>
<dbReference type="FunFam" id="3.40.1440.10:FF:000001">
    <property type="entry name" value="UvrABC system protein C"/>
    <property type="match status" value="1"/>
</dbReference>
<dbReference type="FunFam" id="4.10.860.10:FF:000002">
    <property type="entry name" value="UvrABC system protein C"/>
    <property type="match status" value="1"/>
</dbReference>
<dbReference type="Gene3D" id="1.10.150.20">
    <property type="entry name" value="5' to 3' exonuclease, C-terminal subdomain"/>
    <property type="match status" value="1"/>
</dbReference>
<dbReference type="Gene3D" id="3.40.1440.10">
    <property type="entry name" value="GIY-YIG endonuclease"/>
    <property type="match status" value="1"/>
</dbReference>
<dbReference type="Gene3D" id="4.10.860.10">
    <property type="entry name" value="UVR domain"/>
    <property type="match status" value="1"/>
</dbReference>
<dbReference type="Gene3D" id="3.30.420.340">
    <property type="entry name" value="UvrC, RNAse H endonuclease domain"/>
    <property type="match status" value="1"/>
</dbReference>
<dbReference type="HAMAP" id="MF_00203">
    <property type="entry name" value="UvrC"/>
    <property type="match status" value="1"/>
</dbReference>
<dbReference type="InterPro" id="IPR000305">
    <property type="entry name" value="GIY-YIG_endonuc"/>
</dbReference>
<dbReference type="InterPro" id="IPR035901">
    <property type="entry name" value="GIY-YIG_endonuc_sf"/>
</dbReference>
<dbReference type="InterPro" id="IPR047296">
    <property type="entry name" value="GIY-YIG_UvrC_Cho"/>
</dbReference>
<dbReference type="InterPro" id="IPR003583">
    <property type="entry name" value="Hlx-hairpin-Hlx_DNA-bd_motif"/>
</dbReference>
<dbReference type="InterPro" id="IPR010994">
    <property type="entry name" value="RuvA_2-like"/>
</dbReference>
<dbReference type="InterPro" id="IPR001943">
    <property type="entry name" value="UVR_dom"/>
</dbReference>
<dbReference type="InterPro" id="IPR036876">
    <property type="entry name" value="UVR_dom_sf"/>
</dbReference>
<dbReference type="InterPro" id="IPR050066">
    <property type="entry name" value="UvrABC_protein_C"/>
</dbReference>
<dbReference type="InterPro" id="IPR004791">
    <property type="entry name" value="UvrC"/>
</dbReference>
<dbReference type="InterPro" id="IPR001162">
    <property type="entry name" value="UvrC_RNase_H_dom"/>
</dbReference>
<dbReference type="InterPro" id="IPR038476">
    <property type="entry name" value="UvrC_RNase_H_dom_sf"/>
</dbReference>
<dbReference type="NCBIfam" id="NF001824">
    <property type="entry name" value="PRK00558.1-5"/>
    <property type="match status" value="1"/>
</dbReference>
<dbReference type="NCBIfam" id="TIGR00194">
    <property type="entry name" value="uvrC"/>
    <property type="match status" value="1"/>
</dbReference>
<dbReference type="PANTHER" id="PTHR30562:SF1">
    <property type="entry name" value="UVRABC SYSTEM PROTEIN C"/>
    <property type="match status" value="1"/>
</dbReference>
<dbReference type="PANTHER" id="PTHR30562">
    <property type="entry name" value="UVRC/OXIDOREDUCTASE"/>
    <property type="match status" value="1"/>
</dbReference>
<dbReference type="Pfam" id="PF01541">
    <property type="entry name" value="GIY-YIG"/>
    <property type="match status" value="1"/>
</dbReference>
<dbReference type="Pfam" id="PF14520">
    <property type="entry name" value="HHH_5"/>
    <property type="match status" value="1"/>
</dbReference>
<dbReference type="Pfam" id="PF02151">
    <property type="entry name" value="UVR"/>
    <property type="match status" value="1"/>
</dbReference>
<dbReference type="Pfam" id="PF22920">
    <property type="entry name" value="UvrC_RNaseH"/>
    <property type="match status" value="1"/>
</dbReference>
<dbReference type="Pfam" id="PF08459">
    <property type="entry name" value="UvrC_RNaseH_dom"/>
    <property type="match status" value="1"/>
</dbReference>
<dbReference type="SMART" id="SM00465">
    <property type="entry name" value="GIYc"/>
    <property type="match status" value="1"/>
</dbReference>
<dbReference type="SMART" id="SM00278">
    <property type="entry name" value="HhH1"/>
    <property type="match status" value="2"/>
</dbReference>
<dbReference type="SUPFAM" id="SSF46600">
    <property type="entry name" value="C-terminal UvrC-binding domain of UvrB"/>
    <property type="match status" value="1"/>
</dbReference>
<dbReference type="SUPFAM" id="SSF82771">
    <property type="entry name" value="GIY-YIG endonuclease"/>
    <property type="match status" value="1"/>
</dbReference>
<dbReference type="SUPFAM" id="SSF47781">
    <property type="entry name" value="RuvA domain 2-like"/>
    <property type="match status" value="1"/>
</dbReference>
<dbReference type="PROSITE" id="PS50164">
    <property type="entry name" value="GIY_YIG"/>
    <property type="match status" value="1"/>
</dbReference>
<dbReference type="PROSITE" id="PS50151">
    <property type="entry name" value="UVR"/>
    <property type="match status" value="1"/>
</dbReference>
<dbReference type="PROSITE" id="PS50165">
    <property type="entry name" value="UVRC"/>
    <property type="match status" value="1"/>
</dbReference>